<accession>Q8BVN3</accession>
<accession>A2A9K6</accession>
<protein>
    <recommendedName>
        <fullName>Cation channel sperm-associated protein 4</fullName>
        <shortName>CatSper4</shortName>
    </recommendedName>
</protein>
<comment type="function">
    <text evidence="4 5">Pore-forming subunit of the CatSper complex, a sperm-specific voltage-gated calcium channel that plays a central role in sperm cell hyperactivation. Controls calcium entry to mediate the hyperactivated motility, a step needed for sperm motility which is essential late in the preparation of sperm for fertilization.</text>
</comment>
<comment type="catalytic activity">
    <reaction evidence="4 5">
        <text>Ca(2+)(in) = Ca(2+)(out)</text>
        <dbReference type="Rhea" id="RHEA:29671"/>
        <dbReference type="ChEBI" id="CHEBI:29108"/>
    </reaction>
</comment>
<comment type="activity regulation">
    <text evidence="1 8">In contrast to the human ortholog, not activated by progesterone (PubMed:21412339). Activated by intracellular alkalinization (By similarity).</text>
</comment>
<comment type="subunit">
    <text evidence="2 4 7 9 10">Component of the CatSper complex or CatSpermasome composed of the core pore-forming members CATSPER1, CATSPER2, CATSPER3 and CATSPER4 as well as auxiliary members CATSPERB, CATSPERG2, CATSPERD, CATSPERE, CATSPERZ, C2CD6/CATSPERT, SLCO6C1, TMEM249, TMEM262 and EFCAB9 (PubMed:17227845, PubMed:21224844, PubMed:34225353). HSPA1 may be an additional auxiliary complex member (By similarity). The core complex members CATSPER1, CATSPER2, CATSPER3 and CATSPER4 form a heterotetrameric channel (PubMed:34225353). The auxiliary CATSPERB, CATSPERG2, CATSPERD and CATSPERE subunits form a pavilion-like structure over the pore which stabilizes the complex through interactions with CATSPER4, CATSPER3, CATSPER1 and CATSPER2 respectively (PubMed:34225353). SLCO6C1 interacts with CATSPERE and TMEM262/CATSPERH interacts with CATSPERB, further stabilizing the complex (PubMed:34225353). C2CD6/CATSPERT interacts at least with CATSPERD and is required for targeting the CatSper complex in the flagellar membrane (Probable).</text>
</comment>
<comment type="interaction">
    <interactant intactId="EBI-15619199">
        <id>Q8BVN3</id>
    </interactant>
    <interactant intactId="EBI-15619083">
        <id>Q91ZR5</id>
        <label>Catsper1</label>
    </interactant>
    <organismsDiffer>false</organismsDiffer>
    <experiments>2</experiments>
</comment>
<comment type="subcellular location">
    <subcellularLocation>
        <location evidence="3 4">Cell projection</location>
        <location evidence="3 4">Cilium</location>
        <location evidence="3 4">Flagellum membrane</location>
        <topology evidence="9">Multi-pass membrane protein</topology>
    </subcellularLocation>
    <text evidence="4 9">Specifically located in the principal piece of the sperm tail.</text>
</comment>
<comment type="tissue specificity">
    <text evidence="3 4">Testis-specific.</text>
</comment>
<comment type="developmental stage">
    <text evidence="6">Detected in hte testis during postnatal development at day 15. Restricted to the late-stage germline cells that line the seminiferous tubules.</text>
</comment>
<comment type="disruption phenotype">
    <text evidence="4 5">Mice are normal but males are sterile. Male sterility is due to defects in sperm motility unability to fertilize intact eggs.</text>
</comment>
<comment type="similarity">
    <text evidence="10">Belongs to the cation channel sperm-associated (TC 1.A.1.19) family.</text>
</comment>
<comment type="sequence caution" evidence="10">
    <conflict type="erroneous gene model prediction">
        <sequence resource="EMBL-CDS" id="CAM21941"/>
    </conflict>
</comment>
<evidence type="ECO:0000250" key="1">
    <source>
        <dbReference type="UniProtKB" id="Q7RTX7"/>
    </source>
</evidence>
<evidence type="ECO:0000250" key="2">
    <source>
        <dbReference type="UniProtKB" id="Q91ZR5"/>
    </source>
</evidence>
<evidence type="ECO:0000269" key="3">
    <source>
    </source>
</evidence>
<evidence type="ECO:0000269" key="4">
    <source>
    </source>
</evidence>
<evidence type="ECO:0000269" key="5">
    <source>
    </source>
</evidence>
<evidence type="ECO:0000269" key="6">
    <source>
    </source>
</evidence>
<evidence type="ECO:0000269" key="7">
    <source>
    </source>
</evidence>
<evidence type="ECO:0000269" key="8">
    <source>
    </source>
</evidence>
<evidence type="ECO:0000269" key="9">
    <source>
    </source>
</evidence>
<evidence type="ECO:0000305" key="10"/>
<evidence type="ECO:0007829" key="11">
    <source>
        <dbReference type="PDB" id="7EEB"/>
    </source>
</evidence>
<sequence length="442" mass="51130">MSEKHKWWQQVENIDITHLGPKRKAYELLGRHEEQVLINRRDVMEKKDAWDVQEFITQMYIKQLLRHPAFQLLLAFLLLSNAITIALRTNSYLGQKHYELFSTIDDIVLTILICEVLLGWLNGFWIFWKDGWNILNFAIVFILFMGFFIKQLDMVAITYPLRVLRLVHVCMAVEPLARIIKVILQSMPDLANVMALILFFMLVFSVFGVTLFGAFVPKHFQNMGVALYTLFICITQDGWLDIYTDFQMDEREYAMEVGGAIYFAVFITLGAFIGLNLFVVVVTTNLEQMMKTGEEEGHLNIKFTETEEDEDWTDELPLVHCTEARKDTSTVPKEPLVGGPLSNLTEKTCDNFCLVLEAIQENLMEYKEIREELNMIVEEVSSIRFNQEQQNVILHKYTSKSATFLSEPPEGANKQDLITALVSREKVSDSNINMVNKHKFSH</sequence>
<dbReference type="EMBL" id="AK077145">
    <property type="protein sequence ID" value="BAC36641.1"/>
    <property type="molecule type" value="mRNA"/>
</dbReference>
<dbReference type="EMBL" id="AL627314">
    <property type="protein sequence ID" value="CAM21940.1"/>
    <property type="molecule type" value="Genomic_DNA"/>
</dbReference>
<dbReference type="EMBL" id="AL627314">
    <property type="protein sequence ID" value="CAM21941.1"/>
    <property type="status" value="ALT_SEQ"/>
    <property type="molecule type" value="Genomic_DNA"/>
</dbReference>
<dbReference type="EMBL" id="BC108974">
    <property type="protein sequence ID" value="AAI08975.1"/>
    <property type="molecule type" value="mRNA"/>
</dbReference>
<dbReference type="EMBL" id="BC108975">
    <property type="protein sequence ID" value="AAI08976.1"/>
    <property type="molecule type" value="mRNA"/>
</dbReference>
<dbReference type="CCDS" id="CCDS18766.1"/>
<dbReference type="RefSeq" id="NP_001123502.1">
    <property type="nucleotide sequence ID" value="NM_001130030.1"/>
</dbReference>
<dbReference type="RefSeq" id="NP_808534.1">
    <property type="nucleotide sequence ID" value="NM_177866.4"/>
</dbReference>
<dbReference type="PDB" id="7EEB">
    <property type="method" value="EM"/>
    <property type="resolution" value="2.90 A"/>
    <property type="chains" value="D=1-442"/>
</dbReference>
<dbReference type="PDBsum" id="7EEB"/>
<dbReference type="EMDB" id="EMD-31076"/>
<dbReference type="SMR" id="Q8BVN3"/>
<dbReference type="BioGRID" id="236869">
    <property type="interactions" value="1"/>
</dbReference>
<dbReference type="ComplexPortal" id="CPX-9078">
    <property type="entry name" value="CatSpermasome complex, gamma subunit variant 2"/>
</dbReference>
<dbReference type="CORUM" id="Q8BVN3"/>
<dbReference type="DIP" id="DIP-60803N"/>
<dbReference type="FunCoup" id="Q8BVN3">
    <property type="interactions" value="15"/>
</dbReference>
<dbReference type="IntAct" id="Q8BVN3">
    <property type="interactions" value="2"/>
</dbReference>
<dbReference type="STRING" id="10090.ENSMUSP00000051694"/>
<dbReference type="GuidetoPHARMACOLOGY" id="391"/>
<dbReference type="TCDB" id="1.A.1.19.3">
    <property type="family name" value="the voltage-gated ion channel (vic) superfamily"/>
</dbReference>
<dbReference type="PhosphoSitePlus" id="Q8BVN3"/>
<dbReference type="PaxDb" id="10090-ENSMUSP00000051694"/>
<dbReference type="ProteomicsDB" id="285429"/>
<dbReference type="Antibodypedia" id="51012">
    <property type="antibodies" value="89 antibodies from 21 providers"/>
</dbReference>
<dbReference type="Ensembl" id="ENSMUST00000055892.10">
    <property type="protein sequence ID" value="ENSMUSP00000051694.4"/>
    <property type="gene ID" value="ENSMUSG00000048003.13"/>
</dbReference>
<dbReference type="GeneID" id="329954"/>
<dbReference type="KEGG" id="mmu:329954"/>
<dbReference type="UCSC" id="uc008veh.2">
    <property type="organism name" value="mouse"/>
</dbReference>
<dbReference type="AGR" id="MGI:3043288"/>
<dbReference type="CTD" id="378807"/>
<dbReference type="MGI" id="MGI:3043288">
    <property type="gene designation" value="Catsper4"/>
</dbReference>
<dbReference type="VEuPathDB" id="HostDB:ENSMUSG00000048003"/>
<dbReference type="eggNOG" id="KOG2301">
    <property type="taxonomic scope" value="Eukaryota"/>
</dbReference>
<dbReference type="GeneTree" id="ENSGT00940000161879"/>
<dbReference type="HOGENOM" id="CLU_042053_0_0_1"/>
<dbReference type="InParanoid" id="Q8BVN3"/>
<dbReference type="OMA" id="CELLLGW"/>
<dbReference type="OrthoDB" id="2984333at2759"/>
<dbReference type="PhylomeDB" id="Q8BVN3"/>
<dbReference type="TreeFam" id="TF343841"/>
<dbReference type="Reactome" id="R-MMU-1300642">
    <property type="pathway name" value="Sperm Motility And Taxes"/>
</dbReference>
<dbReference type="BioGRID-ORCS" id="329954">
    <property type="hits" value="0 hits in 78 CRISPR screens"/>
</dbReference>
<dbReference type="ChiTaRS" id="Catsper4">
    <property type="organism name" value="mouse"/>
</dbReference>
<dbReference type="PRO" id="PR:Q8BVN3"/>
<dbReference type="Proteomes" id="UP000000589">
    <property type="component" value="Chromosome 4"/>
</dbReference>
<dbReference type="RNAct" id="Q8BVN3">
    <property type="molecule type" value="protein"/>
</dbReference>
<dbReference type="Bgee" id="ENSMUSG00000048003">
    <property type="expression patterns" value="Expressed in spermatid and 35 other cell types or tissues"/>
</dbReference>
<dbReference type="ExpressionAtlas" id="Q8BVN3">
    <property type="expression patterns" value="baseline and differential"/>
</dbReference>
<dbReference type="GO" id="GO:0001669">
    <property type="term" value="C:acrosomal vesicle"/>
    <property type="evidence" value="ECO:0000314"/>
    <property type="project" value="MGI"/>
</dbReference>
<dbReference type="GO" id="GO:0036128">
    <property type="term" value="C:CatSper complex"/>
    <property type="evidence" value="ECO:0000314"/>
    <property type="project" value="UniProtKB"/>
</dbReference>
<dbReference type="GO" id="GO:0097228">
    <property type="term" value="C:sperm principal piece"/>
    <property type="evidence" value="ECO:0000314"/>
    <property type="project" value="UniProtKB"/>
</dbReference>
<dbReference type="GO" id="GO:0005227">
    <property type="term" value="F:calcium-activated cation channel activity"/>
    <property type="evidence" value="ECO:0007669"/>
    <property type="project" value="InterPro"/>
</dbReference>
<dbReference type="GO" id="GO:0005245">
    <property type="term" value="F:voltage-gated calcium channel activity"/>
    <property type="evidence" value="ECO:0000315"/>
    <property type="project" value="MGI"/>
</dbReference>
<dbReference type="GO" id="GO:0051649">
    <property type="term" value="P:establishment of localization in cell"/>
    <property type="evidence" value="ECO:0000315"/>
    <property type="project" value="MGI"/>
</dbReference>
<dbReference type="GO" id="GO:0030317">
    <property type="term" value="P:flagellated sperm motility"/>
    <property type="evidence" value="ECO:0000315"/>
    <property type="project" value="MGI"/>
</dbReference>
<dbReference type="GO" id="GO:0006814">
    <property type="term" value="P:sodium ion transport"/>
    <property type="evidence" value="ECO:0000315"/>
    <property type="project" value="MGI"/>
</dbReference>
<dbReference type="GO" id="GO:0048240">
    <property type="term" value="P:sperm capacitation"/>
    <property type="evidence" value="ECO:0000315"/>
    <property type="project" value="MGI"/>
</dbReference>
<dbReference type="Gene3D" id="1.10.287.70">
    <property type="match status" value="1"/>
</dbReference>
<dbReference type="Gene3D" id="1.20.120.350">
    <property type="entry name" value="Voltage-gated potassium channels. Chain C"/>
    <property type="match status" value="1"/>
</dbReference>
<dbReference type="InterPro" id="IPR028744">
    <property type="entry name" value="CatSper4"/>
</dbReference>
<dbReference type="InterPro" id="IPR005821">
    <property type="entry name" value="Ion_trans_dom"/>
</dbReference>
<dbReference type="InterPro" id="IPR027359">
    <property type="entry name" value="Volt_channel_dom_sf"/>
</dbReference>
<dbReference type="PANTHER" id="PTHR47077:SF1">
    <property type="entry name" value="CATION CHANNEL SPERM-ASSOCIATED PROTEIN 4"/>
    <property type="match status" value="1"/>
</dbReference>
<dbReference type="PANTHER" id="PTHR47077">
    <property type="entry name" value="ION_TRANS DOMAIN-CONTAINING PROTEIN"/>
    <property type="match status" value="1"/>
</dbReference>
<dbReference type="Pfam" id="PF00520">
    <property type="entry name" value="Ion_trans"/>
    <property type="match status" value="1"/>
</dbReference>
<dbReference type="SUPFAM" id="SSF81324">
    <property type="entry name" value="Voltage-gated potassium channels"/>
    <property type="match status" value="1"/>
</dbReference>
<proteinExistence type="evidence at protein level"/>
<feature type="chain" id="PRO_0000295682" description="Cation channel sperm-associated protein 4">
    <location>
        <begin position="1"/>
        <end position="442"/>
    </location>
</feature>
<feature type="topological domain" description="Cytoplasmic" evidence="9">
    <location>
        <begin position="1"/>
        <end position="66"/>
    </location>
</feature>
<feature type="transmembrane region" description="Helical; Name=Segment S1" evidence="9">
    <location>
        <begin position="67"/>
        <end position="88"/>
    </location>
</feature>
<feature type="topological domain" description="Extracellular" evidence="9">
    <location>
        <begin position="89"/>
        <end position="98"/>
    </location>
</feature>
<feature type="transmembrane region" description="Helical; Name=Segment S2" evidence="9">
    <location>
        <begin position="99"/>
        <end position="125"/>
    </location>
</feature>
<feature type="topological domain" description="Cytoplasmic" evidence="9">
    <location>
        <begin position="126"/>
        <end position="129"/>
    </location>
</feature>
<feature type="transmembrane region" description="Helical; Name=Segment S3" evidence="9">
    <location>
        <begin position="130"/>
        <end position="153"/>
    </location>
</feature>
<feature type="topological domain" description="Extracellular" evidence="9">
    <location>
        <begin position="154"/>
        <end position="156"/>
    </location>
</feature>
<feature type="transmembrane region" description="Helical; Name=Segment S4" evidence="9">
    <location>
        <begin position="157"/>
        <end position="175"/>
    </location>
</feature>
<feature type="topological domain" description="Cytoplasmic" evidence="9">
    <location>
        <begin position="176"/>
        <end position="188"/>
    </location>
</feature>
<feature type="transmembrane region" description="Helical; Name=Segment S5" evidence="9">
    <location>
        <begin position="189"/>
        <end position="212"/>
    </location>
</feature>
<feature type="topological domain" description="Extracellular" evidence="9">
    <location>
        <begin position="213"/>
        <end position="222"/>
    </location>
</feature>
<feature type="intramembrane region" description="Helical; Pore-forming" evidence="9">
    <location>
        <begin position="223"/>
        <end position="234"/>
    </location>
</feature>
<feature type="topological domain" description="Extracellular" evidence="9">
    <location>
        <begin position="235"/>
        <end position="255"/>
    </location>
</feature>
<feature type="transmembrane region" description="Helical; Name=Segment S6" evidence="9">
    <location>
        <begin position="256"/>
        <end position="283"/>
    </location>
</feature>
<feature type="topological domain" description="Cytoplasmic" evidence="9">
    <location>
        <begin position="284"/>
        <end position="442"/>
    </location>
</feature>
<feature type="helix" evidence="11">
    <location>
        <begin position="54"/>
        <end position="65"/>
    </location>
</feature>
<feature type="helix" evidence="11">
    <location>
        <begin position="68"/>
        <end position="88"/>
    </location>
</feature>
<feature type="helix" evidence="11">
    <location>
        <begin position="91"/>
        <end position="96"/>
    </location>
</feature>
<feature type="helix" evidence="11">
    <location>
        <begin position="98"/>
        <end position="121"/>
    </location>
</feature>
<feature type="helix" evidence="11">
    <location>
        <begin position="124"/>
        <end position="127"/>
    </location>
</feature>
<feature type="strand" evidence="11">
    <location>
        <begin position="129"/>
        <end position="131"/>
    </location>
</feature>
<feature type="helix" evidence="11">
    <location>
        <begin position="132"/>
        <end position="148"/>
    </location>
</feature>
<feature type="strand" evidence="11">
    <location>
        <begin position="150"/>
        <end position="152"/>
    </location>
</feature>
<feature type="helix" evidence="11">
    <location>
        <begin position="155"/>
        <end position="158"/>
    </location>
</feature>
<feature type="helix" evidence="11">
    <location>
        <begin position="161"/>
        <end position="164"/>
    </location>
</feature>
<feature type="helix" evidence="11">
    <location>
        <begin position="166"/>
        <end position="170"/>
    </location>
</feature>
<feature type="turn" evidence="11">
    <location>
        <begin position="174"/>
        <end position="176"/>
    </location>
</feature>
<feature type="helix" evidence="11">
    <location>
        <begin position="177"/>
        <end position="212"/>
    </location>
</feature>
<feature type="turn" evidence="11">
    <location>
        <begin position="217"/>
        <end position="219"/>
    </location>
</feature>
<feature type="strand" evidence="11">
    <location>
        <begin position="220"/>
        <end position="222"/>
    </location>
</feature>
<feature type="helix" evidence="11">
    <location>
        <begin position="223"/>
        <end position="234"/>
    </location>
</feature>
<feature type="helix" evidence="11">
    <location>
        <begin position="239"/>
        <end position="247"/>
    </location>
</feature>
<feature type="strand" evidence="11">
    <location>
        <begin position="249"/>
        <end position="251"/>
    </location>
</feature>
<feature type="helix" evidence="11">
    <location>
        <begin position="254"/>
        <end position="270"/>
    </location>
</feature>
<feature type="turn" evidence="11">
    <location>
        <begin position="271"/>
        <end position="276"/>
    </location>
</feature>
<feature type="helix" evidence="11">
    <location>
        <begin position="278"/>
        <end position="291"/>
    </location>
</feature>
<name>CTSR4_MOUSE</name>
<gene>
    <name type="primary">Catsper4</name>
</gene>
<organism>
    <name type="scientific">Mus musculus</name>
    <name type="common">Mouse</name>
    <dbReference type="NCBI Taxonomy" id="10090"/>
    <lineage>
        <taxon>Eukaryota</taxon>
        <taxon>Metazoa</taxon>
        <taxon>Chordata</taxon>
        <taxon>Craniata</taxon>
        <taxon>Vertebrata</taxon>
        <taxon>Euteleostomi</taxon>
        <taxon>Mammalia</taxon>
        <taxon>Eutheria</taxon>
        <taxon>Euarchontoglires</taxon>
        <taxon>Glires</taxon>
        <taxon>Rodentia</taxon>
        <taxon>Myomorpha</taxon>
        <taxon>Muroidea</taxon>
        <taxon>Muridae</taxon>
        <taxon>Murinae</taxon>
        <taxon>Mus</taxon>
        <taxon>Mus</taxon>
    </lineage>
</organism>
<reference key="1">
    <citation type="journal article" date="2005" name="Science">
        <title>The transcriptional landscape of the mammalian genome.</title>
        <authorList>
            <person name="Carninci P."/>
            <person name="Kasukawa T."/>
            <person name="Katayama S."/>
            <person name="Gough J."/>
            <person name="Frith M.C."/>
            <person name="Maeda N."/>
            <person name="Oyama R."/>
            <person name="Ravasi T."/>
            <person name="Lenhard B."/>
            <person name="Wells C."/>
            <person name="Kodzius R."/>
            <person name="Shimokawa K."/>
            <person name="Bajic V.B."/>
            <person name="Brenner S.E."/>
            <person name="Batalov S."/>
            <person name="Forrest A.R."/>
            <person name="Zavolan M."/>
            <person name="Davis M.J."/>
            <person name="Wilming L.G."/>
            <person name="Aidinis V."/>
            <person name="Allen J.E."/>
            <person name="Ambesi-Impiombato A."/>
            <person name="Apweiler R."/>
            <person name="Aturaliya R.N."/>
            <person name="Bailey T.L."/>
            <person name="Bansal M."/>
            <person name="Baxter L."/>
            <person name="Beisel K.W."/>
            <person name="Bersano T."/>
            <person name="Bono H."/>
            <person name="Chalk A.M."/>
            <person name="Chiu K.P."/>
            <person name="Choudhary V."/>
            <person name="Christoffels A."/>
            <person name="Clutterbuck D.R."/>
            <person name="Crowe M.L."/>
            <person name="Dalla E."/>
            <person name="Dalrymple B.P."/>
            <person name="de Bono B."/>
            <person name="Della Gatta G."/>
            <person name="di Bernardo D."/>
            <person name="Down T."/>
            <person name="Engstrom P."/>
            <person name="Fagiolini M."/>
            <person name="Faulkner G."/>
            <person name="Fletcher C.F."/>
            <person name="Fukushima T."/>
            <person name="Furuno M."/>
            <person name="Futaki S."/>
            <person name="Gariboldi M."/>
            <person name="Georgii-Hemming P."/>
            <person name="Gingeras T.R."/>
            <person name="Gojobori T."/>
            <person name="Green R.E."/>
            <person name="Gustincich S."/>
            <person name="Harbers M."/>
            <person name="Hayashi Y."/>
            <person name="Hensch T.K."/>
            <person name="Hirokawa N."/>
            <person name="Hill D."/>
            <person name="Huminiecki L."/>
            <person name="Iacono M."/>
            <person name="Ikeo K."/>
            <person name="Iwama A."/>
            <person name="Ishikawa T."/>
            <person name="Jakt M."/>
            <person name="Kanapin A."/>
            <person name="Katoh M."/>
            <person name="Kawasawa Y."/>
            <person name="Kelso J."/>
            <person name="Kitamura H."/>
            <person name="Kitano H."/>
            <person name="Kollias G."/>
            <person name="Krishnan S.P."/>
            <person name="Kruger A."/>
            <person name="Kummerfeld S.K."/>
            <person name="Kurochkin I.V."/>
            <person name="Lareau L.F."/>
            <person name="Lazarevic D."/>
            <person name="Lipovich L."/>
            <person name="Liu J."/>
            <person name="Liuni S."/>
            <person name="McWilliam S."/>
            <person name="Madan Babu M."/>
            <person name="Madera M."/>
            <person name="Marchionni L."/>
            <person name="Matsuda H."/>
            <person name="Matsuzawa S."/>
            <person name="Miki H."/>
            <person name="Mignone F."/>
            <person name="Miyake S."/>
            <person name="Morris K."/>
            <person name="Mottagui-Tabar S."/>
            <person name="Mulder N."/>
            <person name="Nakano N."/>
            <person name="Nakauchi H."/>
            <person name="Ng P."/>
            <person name="Nilsson R."/>
            <person name="Nishiguchi S."/>
            <person name="Nishikawa S."/>
            <person name="Nori F."/>
            <person name="Ohara O."/>
            <person name="Okazaki Y."/>
            <person name="Orlando V."/>
            <person name="Pang K.C."/>
            <person name="Pavan W.J."/>
            <person name="Pavesi G."/>
            <person name="Pesole G."/>
            <person name="Petrovsky N."/>
            <person name="Piazza S."/>
            <person name="Reed J."/>
            <person name="Reid J.F."/>
            <person name="Ring B.Z."/>
            <person name="Ringwald M."/>
            <person name="Rost B."/>
            <person name="Ruan Y."/>
            <person name="Salzberg S.L."/>
            <person name="Sandelin A."/>
            <person name="Schneider C."/>
            <person name="Schoenbach C."/>
            <person name="Sekiguchi K."/>
            <person name="Semple C.A."/>
            <person name="Seno S."/>
            <person name="Sessa L."/>
            <person name="Sheng Y."/>
            <person name="Shibata Y."/>
            <person name="Shimada H."/>
            <person name="Shimada K."/>
            <person name="Silva D."/>
            <person name="Sinclair B."/>
            <person name="Sperling S."/>
            <person name="Stupka E."/>
            <person name="Sugiura K."/>
            <person name="Sultana R."/>
            <person name="Takenaka Y."/>
            <person name="Taki K."/>
            <person name="Tammoja K."/>
            <person name="Tan S.L."/>
            <person name="Tang S."/>
            <person name="Taylor M.S."/>
            <person name="Tegner J."/>
            <person name="Teichmann S.A."/>
            <person name="Ueda H.R."/>
            <person name="van Nimwegen E."/>
            <person name="Verardo R."/>
            <person name="Wei C.L."/>
            <person name="Yagi K."/>
            <person name="Yamanishi H."/>
            <person name="Zabarovsky E."/>
            <person name="Zhu S."/>
            <person name="Zimmer A."/>
            <person name="Hide W."/>
            <person name="Bult C."/>
            <person name="Grimmond S.M."/>
            <person name="Teasdale R.D."/>
            <person name="Liu E.T."/>
            <person name="Brusic V."/>
            <person name="Quackenbush J."/>
            <person name="Wahlestedt C."/>
            <person name="Mattick J.S."/>
            <person name="Hume D.A."/>
            <person name="Kai C."/>
            <person name="Sasaki D."/>
            <person name="Tomaru Y."/>
            <person name="Fukuda S."/>
            <person name="Kanamori-Katayama M."/>
            <person name="Suzuki M."/>
            <person name="Aoki J."/>
            <person name="Arakawa T."/>
            <person name="Iida J."/>
            <person name="Imamura K."/>
            <person name="Itoh M."/>
            <person name="Kato T."/>
            <person name="Kawaji H."/>
            <person name="Kawagashira N."/>
            <person name="Kawashima T."/>
            <person name="Kojima M."/>
            <person name="Kondo S."/>
            <person name="Konno H."/>
            <person name="Nakano K."/>
            <person name="Ninomiya N."/>
            <person name="Nishio T."/>
            <person name="Okada M."/>
            <person name="Plessy C."/>
            <person name="Shibata K."/>
            <person name="Shiraki T."/>
            <person name="Suzuki S."/>
            <person name="Tagami M."/>
            <person name="Waki K."/>
            <person name="Watahiki A."/>
            <person name="Okamura-Oho Y."/>
            <person name="Suzuki H."/>
            <person name="Kawai J."/>
            <person name="Hayashizaki Y."/>
        </authorList>
    </citation>
    <scope>NUCLEOTIDE SEQUENCE [LARGE SCALE MRNA]</scope>
    <source>
        <strain>C57BL/6J</strain>
        <tissue>Testis</tissue>
    </source>
</reference>
<reference key="2">
    <citation type="journal article" date="2009" name="PLoS Biol.">
        <title>Lineage-specific biology revealed by a finished genome assembly of the mouse.</title>
        <authorList>
            <person name="Church D.M."/>
            <person name="Goodstadt L."/>
            <person name="Hillier L.W."/>
            <person name="Zody M.C."/>
            <person name="Goldstein S."/>
            <person name="She X."/>
            <person name="Bult C.J."/>
            <person name="Agarwala R."/>
            <person name="Cherry J.L."/>
            <person name="DiCuccio M."/>
            <person name="Hlavina W."/>
            <person name="Kapustin Y."/>
            <person name="Meric P."/>
            <person name="Maglott D."/>
            <person name="Birtle Z."/>
            <person name="Marques A.C."/>
            <person name="Graves T."/>
            <person name="Zhou S."/>
            <person name="Teague B."/>
            <person name="Potamousis K."/>
            <person name="Churas C."/>
            <person name="Place M."/>
            <person name="Herschleb J."/>
            <person name="Runnheim R."/>
            <person name="Forrest D."/>
            <person name="Amos-Landgraf J."/>
            <person name="Schwartz D.C."/>
            <person name="Cheng Z."/>
            <person name="Lindblad-Toh K."/>
            <person name="Eichler E.E."/>
            <person name="Ponting C.P."/>
        </authorList>
    </citation>
    <scope>NUCLEOTIDE SEQUENCE [LARGE SCALE GENOMIC DNA]</scope>
    <source>
        <strain>C57BL/6J</strain>
    </source>
</reference>
<reference key="3">
    <citation type="journal article" date="2004" name="Genome Res.">
        <title>The status, quality, and expansion of the NIH full-length cDNA project: the Mammalian Gene Collection (MGC).</title>
        <authorList>
            <consortium name="The MGC Project Team"/>
        </authorList>
    </citation>
    <scope>NUCLEOTIDE SEQUENCE [LARGE SCALE MRNA]</scope>
</reference>
<reference key="4">
    <citation type="journal article" date="2005" name="Biol. Reprod.">
        <title>Catsper3 and catsper4 encode two cation channel-like proteins exclusively expressed in the testis.</title>
        <authorList>
            <person name="Jin J.-L."/>
            <person name="O'Doherty A.M."/>
            <person name="Wang S."/>
            <person name="Zheng H."/>
            <person name="Sanders K.M."/>
            <person name="Yan W."/>
        </authorList>
    </citation>
    <scope>SUBCELLULAR LOCATION</scope>
    <scope>TISSUE SPECIFICITY</scope>
</reference>
<reference key="5">
    <citation type="journal article" date="2007" name="Mol. Hum. Reprod.">
        <title>Expression of CatSper family transcripts in the mouse testis during post-natal development and human ejaculated spermatozoa: relationship to sperm motility.</title>
        <authorList>
            <person name="Li H.-G."/>
            <person name="Ding X.-F."/>
            <person name="Liao A.-H."/>
            <person name="Kong X.-B."/>
            <person name="Xiong C.-L."/>
        </authorList>
    </citation>
    <scope>DEVELOPMENTAL STAGE</scope>
</reference>
<reference key="6">
    <citation type="journal article" date="2007" name="Biol. Reprod.">
        <title>Catsper3 and catsper4 are essential for sperm hyperactivated motility and male fertility in the mouse.</title>
        <authorList>
            <person name="Jin J.-L."/>
            <person name="Jin N."/>
            <person name="Zheng H."/>
            <person name="Ro S."/>
            <person name="Tafolla D."/>
            <person name="Sanders K.M."/>
            <person name="Yan W."/>
        </authorList>
    </citation>
    <scope>FUNCTION</scope>
    <scope>TRANSPORTER ACTIVITY</scope>
    <scope>DISRUPTION PHENOTYPE</scope>
</reference>
<reference key="7">
    <citation type="journal article" date="2007" name="Proc. Natl. Acad. Sci. U.S.A.">
        <title>All four CatSper ion channel proteins are required for male fertility and sperm cell hyperactivated motility.</title>
        <authorList>
            <person name="Qi H."/>
            <person name="Moran M.M."/>
            <person name="Navarro B."/>
            <person name="Chong J.A."/>
            <person name="Krapivinsky G."/>
            <person name="Krapivinsky L."/>
            <person name="Kirichok Y."/>
            <person name="Ramsey I.S."/>
            <person name="Quill T.A."/>
            <person name="Clapham D.E."/>
        </authorList>
    </citation>
    <scope>FUNCTION</scope>
    <scope>TRANSPORTER ACTIVITY</scope>
    <scope>SUBCELLULAR LOCATION</scope>
    <scope>TISSUE SPECIFICITY</scope>
    <scope>INTERACTION WITH CATSPER1</scope>
    <scope>DISRUPTION PHENOTYPE</scope>
</reference>
<reference key="8">
    <citation type="journal article" date="2011" name="Nature">
        <title>Progesterone activates the principal Ca2+ channel of human sperm.</title>
        <authorList>
            <person name="Lishko P.V."/>
            <person name="Botchkina I.L."/>
            <person name="Kirichok Y."/>
        </authorList>
    </citation>
    <scope>LACK OF ACTIVATION BY PROGESTERONE AND PGE1</scope>
</reference>
<reference key="9">
    <citation type="journal article" date="2011" name="Nat. Commun.">
        <title>A novel gene required for male fertility and functional CATSPER channel formation in spermatozoa.</title>
        <authorList>
            <person name="Chung J.J."/>
            <person name="Navarro B."/>
            <person name="Krapivinsky G."/>
            <person name="Krapivinsky L."/>
            <person name="Clapham D.E."/>
        </authorList>
    </citation>
    <scope>IDENTIFICATION IN THE CATSPER COMPLEX</scope>
    <source>
        <strain>C57BL/6J</strain>
    </source>
</reference>
<reference key="10">
    <citation type="journal article" date="2021" name="Nature">
        <title>Structure of a mammalian sperm cation channel complex.</title>
        <authorList>
            <person name="Lin S."/>
            <person name="Ke M."/>
            <person name="Zhang Y."/>
            <person name="Yan Z."/>
            <person name="Wu J."/>
        </authorList>
    </citation>
    <scope>STRUCTURE BY ELECTRON MICROSCOPY (2.9 ANGSTROMS) OF THE CATSPER COMPLEX</scope>
    <scope>IDENTIFICATION BY MASS SPECTROMETRY</scope>
    <scope>SUBCELLULAR LOCATION</scope>
    <scope>TRANSMEMBRANE DOMAINS</scope>
    <scope>TOPOLOGY</scope>
</reference>
<keyword id="KW-0002">3D-structure</keyword>
<keyword id="KW-0106">Calcium</keyword>
<keyword id="KW-0107">Calcium channel</keyword>
<keyword id="KW-0109">Calcium transport</keyword>
<keyword id="KW-1003">Cell membrane</keyword>
<keyword id="KW-0966">Cell projection</keyword>
<keyword id="KW-0969">Cilium</keyword>
<keyword id="KW-0217">Developmental protein</keyword>
<keyword id="KW-0221">Differentiation</keyword>
<keyword id="KW-0282">Flagellum</keyword>
<keyword id="KW-0407">Ion channel</keyword>
<keyword id="KW-0406">Ion transport</keyword>
<keyword id="KW-0472">Membrane</keyword>
<keyword id="KW-1185">Reference proteome</keyword>
<keyword id="KW-0744">Spermatogenesis</keyword>
<keyword id="KW-0812">Transmembrane</keyword>
<keyword id="KW-1133">Transmembrane helix</keyword>
<keyword id="KW-0813">Transport</keyword>
<keyword id="KW-0851">Voltage-gated channel</keyword>